<evidence type="ECO:0000255" key="1">
    <source>
        <dbReference type="HAMAP-Rule" id="MF_00267"/>
    </source>
</evidence>
<organism>
    <name type="scientific">Aeromonas hydrophila subsp. hydrophila (strain ATCC 7966 / DSM 30187 / BCRC 13018 / CCUG 14551 / JCM 1027 / KCTC 2358 / NCIMB 9240 / NCTC 8049)</name>
    <dbReference type="NCBI Taxonomy" id="380703"/>
    <lineage>
        <taxon>Bacteria</taxon>
        <taxon>Pseudomonadati</taxon>
        <taxon>Pseudomonadota</taxon>
        <taxon>Gammaproteobacteria</taxon>
        <taxon>Aeromonadales</taxon>
        <taxon>Aeromonadaceae</taxon>
        <taxon>Aeromonas</taxon>
    </lineage>
</organism>
<sequence>MVERDNELKGTTFTISVLHISDGKPERIRQLLAAKVAQAPQFFNCAPLVINVERLTDIPDFEQLKELVESEDFVLVGITGAQSEAMKTAAKAAGLAVMASGKSRKAEPQPQPEPAPTPAPIVEVKAVPAPLVASKVHVGPVRSGQQLYAAGTSLVVLGSVSPGAEVIADDSIHIYGTLRGRAIAGAKGNPQARIYCQQLQAELLSIAGTFQLSDALPAGLIQQPVHVRLDNEQLRIDRIK</sequence>
<feature type="chain" id="PRO_1000047797" description="Probable septum site-determining protein MinC">
    <location>
        <begin position="1"/>
        <end position="240"/>
    </location>
</feature>
<proteinExistence type="inferred from homology"/>
<keyword id="KW-0131">Cell cycle</keyword>
<keyword id="KW-0132">Cell division</keyword>
<keyword id="KW-1185">Reference proteome</keyword>
<keyword id="KW-0717">Septation</keyword>
<protein>
    <recommendedName>
        <fullName evidence="1">Probable septum site-determining protein MinC</fullName>
    </recommendedName>
</protein>
<gene>
    <name evidence="1" type="primary">minC</name>
    <name type="ordered locus">AHA_2134</name>
</gene>
<name>MINC_AERHH</name>
<comment type="function">
    <text evidence="1">Cell division inhibitor that blocks the formation of polar Z ring septums. Rapidly oscillates between the poles of the cell to destabilize FtsZ filaments that have formed before they mature into polar Z rings. Prevents FtsZ polymerization.</text>
</comment>
<comment type="subunit">
    <text evidence="1">Interacts with MinD and FtsZ.</text>
</comment>
<comment type="similarity">
    <text evidence="1">Belongs to the MinC family.</text>
</comment>
<accession>A0KK57</accession>
<reference key="1">
    <citation type="journal article" date="2006" name="J. Bacteriol.">
        <title>Genome sequence of Aeromonas hydrophila ATCC 7966T: jack of all trades.</title>
        <authorList>
            <person name="Seshadri R."/>
            <person name="Joseph S.W."/>
            <person name="Chopra A.K."/>
            <person name="Sha J."/>
            <person name="Shaw J."/>
            <person name="Graf J."/>
            <person name="Haft D.H."/>
            <person name="Wu M."/>
            <person name="Ren Q."/>
            <person name="Rosovitz M.J."/>
            <person name="Madupu R."/>
            <person name="Tallon L."/>
            <person name="Kim M."/>
            <person name="Jin S."/>
            <person name="Vuong H."/>
            <person name="Stine O.C."/>
            <person name="Ali A."/>
            <person name="Horneman A.J."/>
            <person name="Heidelberg J.F."/>
        </authorList>
    </citation>
    <scope>NUCLEOTIDE SEQUENCE [LARGE SCALE GENOMIC DNA]</scope>
    <source>
        <strain>ATCC 7966 / DSM 30187 / BCRC 13018 / CCUG 14551 / JCM 1027 / KCTC 2358 / NCIMB 9240 / NCTC 8049</strain>
    </source>
</reference>
<dbReference type="EMBL" id="CP000462">
    <property type="protein sequence ID" value="ABK36019.1"/>
    <property type="molecule type" value="Genomic_DNA"/>
</dbReference>
<dbReference type="RefSeq" id="WP_011705993.1">
    <property type="nucleotide sequence ID" value="NC_008570.1"/>
</dbReference>
<dbReference type="RefSeq" id="YP_856658.1">
    <property type="nucleotide sequence ID" value="NC_008570.1"/>
</dbReference>
<dbReference type="SMR" id="A0KK57"/>
<dbReference type="STRING" id="380703.AHA_2134"/>
<dbReference type="EnsemblBacteria" id="ABK36019">
    <property type="protein sequence ID" value="ABK36019"/>
    <property type="gene ID" value="AHA_2134"/>
</dbReference>
<dbReference type="GeneID" id="4488424"/>
<dbReference type="KEGG" id="aha:AHA_2134"/>
<dbReference type="PATRIC" id="fig|380703.7.peg.2135"/>
<dbReference type="eggNOG" id="COG0850">
    <property type="taxonomic scope" value="Bacteria"/>
</dbReference>
<dbReference type="HOGENOM" id="CLU_067812_0_1_6"/>
<dbReference type="OrthoDB" id="9794530at2"/>
<dbReference type="Proteomes" id="UP000000756">
    <property type="component" value="Chromosome"/>
</dbReference>
<dbReference type="GO" id="GO:0000902">
    <property type="term" value="P:cell morphogenesis"/>
    <property type="evidence" value="ECO:0007669"/>
    <property type="project" value="InterPro"/>
</dbReference>
<dbReference type="GO" id="GO:0000917">
    <property type="term" value="P:division septum assembly"/>
    <property type="evidence" value="ECO:0007669"/>
    <property type="project" value="UniProtKB-KW"/>
</dbReference>
<dbReference type="GO" id="GO:0051302">
    <property type="term" value="P:regulation of cell division"/>
    <property type="evidence" value="ECO:0007669"/>
    <property type="project" value="InterPro"/>
</dbReference>
<dbReference type="GO" id="GO:1901891">
    <property type="term" value="P:regulation of cell septum assembly"/>
    <property type="evidence" value="ECO:0007669"/>
    <property type="project" value="InterPro"/>
</dbReference>
<dbReference type="Gene3D" id="2.160.20.70">
    <property type="match status" value="1"/>
</dbReference>
<dbReference type="Gene3D" id="3.30.70.260">
    <property type="match status" value="1"/>
</dbReference>
<dbReference type="HAMAP" id="MF_00267">
    <property type="entry name" value="MinC"/>
    <property type="match status" value="1"/>
</dbReference>
<dbReference type="InterPro" id="IPR016098">
    <property type="entry name" value="CAP/MinC_C"/>
</dbReference>
<dbReference type="InterPro" id="IPR013033">
    <property type="entry name" value="MinC"/>
</dbReference>
<dbReference type="InterPro" id="IPR036145">
    <property type="entry name" value="MinC_C_sf"/>
</dbReference>
<dbReference type="InterPro" id="IPR007874">
    <property type="entry name" value="MinC_N"/>
</dbReference>
<dbReference type="InterPro" id="IPR005526">
    <property type="entry name" value="Septum_form_inhib_MinC_C"/>
</dbReference>
<dbReference type="NCBIfam" id="TIGR01222">
    <property type="entry name" value="minC"/>
    <property type="match status" value="1"/>
</dbReference>
<dbReference type="PANTHER" id="PTHR34108">
    <property type="entry name" value="SEPTUM SITE-DETERMINING PROTEIN MINC"/>
    <property type="match status" value="1"/>
</dbReference>
<dbReference type="PANTHER" id="PTHR34108:SF1">
    <property type="entry name" value="SEPTUM SITE-DETERMINING PROTEIN MINC"/>
    <property type="match status" value="1"/>
</dbReference>
<dbReference type="Pfam" id="PF03775">
    <property type="entry name" value="MinC_C"/>
    <property type="match status" value="1"/>
</dbReference>
<dbReference type="Pfam" id="PF05209">
    <property type="entry name" value="MinC_N"/>
    <property type="match status" value="1"/>
</dbReference>
<dbReference type="SUPFAM" id="SSF63848">
    <property type="entry name" value="Cell-division inhibitor MinC, C-terminal domain"/>
    <property type="match status" value="1"/>
</dbReference>